<gene>
    <name evidence="1" type="primary">dadA</name>
    <name type="ordered locus">Smlt0567</name>
</gene>
<feature type="chain" id="PRO_1000138672" description="D-amino acid dehydrogenase">
    <location>
        <begin position="1"/>
        <end position="434"/>
    </location>
</feature>
<feature type="binding site" evidence="1">
    <location>
        <begin position="3"/>
        <end position="17"/>
    </location>
    <ligand>
        <name>FAD</name>
        <dbReference type="ChEBI" id="CHEBI:57692"/>
    </ligand>
</feature>
<accession>B2FLQ1</accession>
<name>DADA_STRMK</name>
<keyword id="KW-0274">FAD</keyword>
<keyword id="KW-0285">Flavoprotein</keyword>
<keyword id="KW-0560">Oxidoreductase</keyword>
<keyword id="KW-1185">Reference proteome</keyword>
<proteinExistence type="inferred from homology"/>
<sequence length="434" mass="47946">MRVLVLGSGVIGTTSAWYLRQAGFEVTVIDRQPGPALETSFANAGQLSFGYTSPWAAPGVPKKAIGWLFEKHAPLAIKPGMDLAQYRWLWQMLRNCTHERYAINKARMVRMSEYSRDCLNELRAQIGIEFEGRDLGTTQLFRTQQQLDASAQDIEILAQYGVPYEVLDRAGIIQAEPALAHVDGLVGALRLPRDQTGDCQLFTRRLAQMCVDAGVEFRFDQDITGLEFDGDRITGVRIDGKLETADRFVVALGSYSPALVAPLGMRLPVYPLKGYSLTLPITDPAMAPTSTILDESYKVAVTRFDDRIRVGGMAEVAGFDLSLSQRRRETLELVVSDLYPKGGDLSRAQFWTGLRPATPDGTPVIGATPFRNLYLNTGHGTLGWTMACGSGRYLADLMSARQPQISTEGLDIFRYGQYGHAPQQENRTCVLPAR</sequence>
<reference key="1">
    <citation type="journal article" date="2008" name="Genome Biol.">
        <title>The complete genome, comparative and functional analysis of Stenotrophomonas maltophilia reveals an organism heavily shielded by drug resistance determinants.</title>
        <authorList>
            <person name="Crossman L.C."/>
            <person name="Gould V.C."/>
            <person name="Dow J.M."/>
            <person name="Vernikos G.S."/>
            <person name="Okazaki A."/>
            <person name="Sebaihia M."/>
            <person name="Saunders D."/>
            <person name="Arrowsmith C."/>
            <person name="Carver T."/>
            <person name="Peters N."/>
            <person name="Adlem E."/>
            <person name="Kerhornou A."/>
            <person name="Lord A."/>
            <person name="Murphy L."/>
            <person name="Seeger K."/>
            <person name="Squares R."/>
            <person name="Rutter S."/>
            <person name="Quail M.A."/>
            <person name="Rajandream M.A."/>
            <person name="Harris D."/>
            <person name="Churcher C."/>
            <person name="Bentley S.D."/>
            <person name="Parkhill J."/>
            <person name="Thomson N.R."/>
            <person name="Avison M.B."/>
        </authorList>
    </citation>
    <scope>NUCLEOTIDE SEQUENCE [LARGE SCALE GENOMIC DNA]</scope>
    <source>
        <strain>K279a</strain>
    </source>
</reference>
<comment type="function">
    <text evidence="1">Oxidative deamination of D-amino acids.</text>
</comment>
<comment type="catalytic activity">
    <reaction evidence="1">
        <text>a D-alpha-amino acid + A + H2O = a 2-oxocarboxylate + AH2 + NH4(+)</text>
        <dbReference type="Rhea" id="RHEA:18125"/>
        <dbReference type="ChEBI" id="CHEBI:13193"/>
        <dbReference type="ChEBI" id="CHEBI:15377"/>
        <dbReference type="ChEBI" id="CHEBI:17499"/>
        <dbReference type="ChEBI" id="CHEBI:28938"/>
        <dbReference type="ChEBI" id="CHEBI:35179"/>
        <dbReference type="ChEBI" id="CHEBI:59871"/>
    </reaction>
</comment>
<comment type="cofactor">
    <cofactor evidence="1">
        <name>FAD</name>
        <dbReference type="ChEBI" id="CHEBI:57692"/>
    </cofactor>
</comment>
<comment type="pathway">
    <text>Amino-acid degradation; D-alanine degradation; NH(3) and pyruvate from D-alanine: step 1/1.</text>
</comment>
<comment type="similarity">
    <text evidence="1">Belongs to the DadA oxidoreductase family.</text>
</comment>
<organism>
    <name type="scientific">Stenotrophomonas maltophilia (strain K279a)</name>
    <dbReference type="NCBI Taxonomy" id="522373"/>
    <lineage>
        <taxon>Bacteria</taxon>
        <taxon>Pseudomonadati</taxon>
        <taxon>Pseudomonadota</taxon>
        <taxon>Gammaproteobacteria</taxon>
        <taxon>Lysobacterales</taxon>
        <taxon>Lysobacteraceae</taxon>
        <taxon>Stenotrophomonas</taxon>
        <taxon>Stenotrophomonas maltophilia group</taxon>
    </lineage>
</organism>
<evidence type="ECO:0000255" key="1">
    <source>
        <dbReference type="HAMAP-Rule" id="MF_01202"/>
    </source>
</evidence>
<protein>
    <recommendedName>
        <fullName evidence="1">D-amino acid dehydrogenase</fullName>
        <ecNumber evidence="1">1.4.99.-</ecNumber>
    </recommendedName>
</protein>
<dbReference type="EC" id="1.4.99.-" evidence="1"/>
<dbReference type="EMBL" id="AM743169">
    <property type="protein sequence ID" value="CAQ44155.1"/>
    <property type="molecule type" value="Genomic_DNA"/>
</dbReference>
<dbReference type="RefSeq" id="WP_005412127.1">
    <property type="nucleotide sequence ID" value="NC_010943.1"/>
</dbReference>
<dbReference type="SMR" id="B2FLQ1"/>
<dbReference type="EnsemblBacteria" id="CAQ44155">
    <property type="protein sequence ID" value="CAQ44155"/>
    <property type="gene ID" value="Smlt0567"/>
</dbReference>
<dbReference type="KEGG" id="sml:Smlt0567"/>
<dbReference type="eggNOG" id="COG0665">
    <property type="taxonomic scope" value="Bacteria"/>
</dbReference>
<dbReference type="HOGENOM" id="CLU_007884_9_2_6"/>
<dbReference type="UniPathway" id="UPA00043">
    <property type="reaction ID" value="UER00498"/>
</dbReference>
<dbReference type="Proteomes" id="UP000008840">
    <property type="component" value="Chromosome"/>
</dbReference>
<dbReference type="GO" id="GO:0005737">
    <property type="term" value="C:cytoplasm"/>
    <property type="evidence" value="ECO:0007669"/>
    <property type="project" value="TreeGrafter"/>
</dbReference>
<dbReference type="GO" id="GO:0005886">
    <property type="term" value="C:plasma membrane"/>
    <property type="evidence" value="ECO:0007669"/>
    <property type="project" value="TreeGrafter"/>
</dbReference>
<dbReference type="GO" id="GO:0008718">
    <property type="term" value="F:D-amino-acid dehydrogenase activity"/>
    <property type="evidence" value="ECO:0007669"/>
    <property type="project" value="UniProtKB-UniRule"/>
</dbReference>
<dbReference type="GO" id="GO:0055130">
    <property type="term" value="P:D-alanine catabolic process"/>
    <property type="evidence" value="ECO:0007669"/>
    <property type="project" value="UniProtKB-UniPathway"/>
</dbReference>
<dbReference type="FunFam" id="3.50.50.60:FF:000020">
    <property type="entry name" value="D-amino acid dehydrogenase"/>
    <property type="match status" value="1"/>
</dbReference>
<dbReference type="Gene3D" id="3.30.9.10">
    <property type="entry name" value="D-Amino Acid Oxidase, subunit A, domain 2"/>
    <property type="match status" value="1"/>
</dbReference>
<dbReference type="Gene3D" id="3.50.50.60">
    <property type="entry name" value="FAD/NAD(P)-binding domain"/>
    <property type="match status" value="2"/>
</dbReference>
<dbReference type="HAMAP" id="MF_01202">
    <property type="entry name" value="DadA"/>
    <property type="match status" value="1"/>
</dbReference>
<dbReference type="InterPro" id="IPR023080">
    <property type="entry name" value="DadA"/>
</dbReference>
<dbReference type="InterPro" id="IPR006076">
    <property type="entry name" value="FAD-dep_OxRdtase"/>
</dbReference>
<dbReference type="InterPro" id="IPR036188">
    <property type="entry name" value="FAD/NAD-bd_sf"/>
</dbReference>
<dbReference type="NCBIfam" id="NF001933">
    <property type="entry name" value="PRK00711.1"/>
    <property type="match status" value="1"/>
</dbReference>
<dbReference type="PANTHER" id="PTHR13847:SF280">
    <property type="entry name" value="D-AMINO ACID DEHYDROGENASE"/>
    <property type="match status" value="1"/>
</dbReference>
<dbReference type="PANTHER" id="PTHR13847">
    <property type="entry name" value="SARCOSINE DEHYDROGENASE-RELATED"/>
    <property type="match status" value="1"/>
</dbReference>
<dbReference type="Pfam" id="PF01266">
    <property type="entry name" value="DAO"/>
    <property type="match status" value="1"/>
</dbReference>
<dbReference type="SUPFAM" id="SSF54373">
    <property type="entry name" value="FAD-linked reductases, C-terminal domain"/>
    <property type="match status" value="1"/>
</dbReference>
<dbReference type="SUPFAM" id="SSF51905">
    <property type="entry name" value="FAD/NAD(P)-binding domain"/>
    <property type="match status" value="1"/>
</dbReference>